<accession>Q55FQ4</accession>
<sequence>MKLLSVLITFLLATVIYSQTNPATLTFTVQVYDQFPGYNNNFQTNGAGARVTGLIKSTLNSTTRVPELVSTATGGLNGVGLILNPSLFPYFFSPQQDSSLPGQNSPLSLDLVFTYDTTRNIYVYNNQNFFPIDNQGLDVDPAKRIYLNGATYHNYHFCMKMNTVFTYKGYEVFNFQGDDDVWVFINNKLVIDLGGVHGPLAASVDATTLGLTIGNSYNFDLFFCERQTVGSTIKIETNLLFVCPFEDYCGVCQGDGSSCCNPLTTCNDNNQCTIDSCPPANTTIGSGSISDYCIHTPKINTNPIDICFNYQCNSSTGNFDPIPIPCLDRSSECLSTIGCNSTVGCQYESICNSNVCNIQNQCSSNGTCVPKSSNDCGIELDGQVDKCKIYSCDSNGGVGCIKEDKCKPSEDKCHVVSCDSLTGSCITTPLEDPLAGLHLCSIARCNSSTGEFTYDPIICTPSSNPCISTQCNATNGQCYETQIPGDICDCGCGIPENKCKVSWCTPEGICQPKFKSEIDDNNSCTLDSCDPCTGIISHMTAPQCLSCNQCSN</sequence>
<comment type="subcellular location">
    <subcellularLocation>
        <location evidence="3">Secreted</location>
    </subcellularLocation>
</comment>
<comment type="similarity">
    <text evidence="3">Belongs to the prespore-cell-inducing factor family.</text>
</comment>
<name>PSIB_DICDI</name>
<gene>
    <name type="primary">psiB</name>
    <name type="ORF">DDB_G0268000</name>
</gene>
<proteinExistence type="inferred from homology"/>
<keyword id="KW-0325">Glycoprotein</keyword>
<keyword id="KW-1185">Reference proteome</keyword>
<keyword id="KW-0964">Secreted</keyword>
<keyword id="KW-0732">Signal</keyword>
<protein>
    <recommendedName>
        <fullName>Protein psiB</fullName>
    </recommendedName>
</protein>
<organism>
    <name type="scientific">Dictyostelium discoideum</name>
    <name type="common">Social amoeba</name>
    <dbReference type="NCBI Taxonomy" id="44689"/>
    <lineage>
        <taxon>Eukaryota</taxon>
        <taxon>Amoebozoa</taxon>
        <taxon>Evosea</taxon>
        <taxon>Eumycetozoa</taxon>
        <taxon>Dictyostelia</taxon>
        <taxon>Dictyosteliales</taxon>
        <taxon>Dictyosteliaceae</taxon>
        <taxon>Dictyostelium</taxon>
    </lineage>
</organism>
<feature type="signal peptide" evidence="1">
    <location>
        <begin position="1"/>
        <end position="18"/>
    </location>
</feature>
<feature type="chain" id="PRO_0000327547" description="Protein psiB">
    <location>
        <begin position="19"/>
        <end position="552"/>
    </location>
</feature>
<feature type="domain" description="PA14" evidence="2">
    <location>
        <begin position="114"/>
        <end position="255"/>
    </location>
</feature>
<feature type="glycosylation site" description="N-linked (GlcNAc...) asparagine" evidence="1">
    <location>
        <position position="60"/>
    </location>
</feature>
<feature type="glycosylation site" description="N-linked (GlcNAc...) asparagine" evidence="1">
    <location>
        <position position="281"/>
    </location>
</feature>
<feature type="glycosylation site" description="N-linked (GlcNAc...) asparagine" evidence="1">
    <location>
        <position position="313"/>
    </location>
</feature>
<feature type="glycosylation site" description="N-linked (GlcNAc...) asparagine" evidence="1">
    <location>
        <position position="340"/>
    </location>
</feature>
<feature type="glycosylation site" description="N-linked (GlcNAc...) asparagine" evidence="1">
    <location>
        <position position="365"/>
    </location>
</feature>
<feature type="glycosylation site" description="N-linked (GlcNAc...) asparagine" evidence="1">
    <location>
        <position position="446"/>
    </location>
</feature>
<feature type="glycosylation site" description="N-linked (GlcNAc...) asparagine" evidence="1">
    <location>
        <position position="472"/>
    </location>
</feature>
<feature type="glycosylation site" description="N-linked (GlcNAc...) asparagine" evidence="1">
    <location>
        <position position="521"/>
    </location>
</feature>
<dbReference type="EMBL" id="AAFI02000003">
    <property type="protein sequence ID" value="EAL73453.1"/>
    <property type="molecule type" value="Genomic_DNA"/>
</dbReference>
<dbReference type="RefSeq" id="XP_647479.1">
    <property type="nucleotide sequence ID" value="XM_642387.1"/>
</dbReference>
<dbReference type="FunCoup" id="Q55FQ4">
    <property type="interactions" value="20"/>
</dbReference>
<dbReference type="GlyCosmos" id="Q55FQ4">
    <property type="glycosylation" value="8 sites, No reported glycans"/>
</dbReference>
<dbReference type="GlyGen" id="Q55FQ4">
    <property type="glycosylation" value="8 sites"/>
</dbReference>
<dbReference type="PaxDb" id="44689-DDB0266348"/>
<dbReference type="EnsemblProtists" id="EAL73453">
    <property type="protein sequence ID" value="EAL73453"/>
    <property type="gene ID" value="DDB_G0268000"/>
</dbReference>
<dbReference type="GeneID" id="8616287"/>
<dbReference type="KEGG" id="ddi:DDB_G0268000"/>
<dbReference type="dictyBase" id="DDB_G0268000">
    <property type="gene designation" value="psiB"/>
</dbReference>
<dbReference type="VEuPathDB" id="AmoebaDB:DDB_G0268000"/>
<dbReference type="eggNOG" id="ENOG502QQ2D">
    <property type="taxonomic scope" value="Eukaryota"/>
</dbReference>
<dbReference type="HOGENOM" id="CLU_024170_0_0_1"/>
<dbReference type="InParanoid" id="Q55FQ4"/>
<dbReference type="OMA" id="ICNVKDQ"/>
<dbReference type="PhylomeDB" id="Q55FQ4"/>
<dbReference type="PRO" id="PR:Q55FQ4"/>
<dbReference type="Proteomes" id="UP000002195">
    <property type="component" value="Chromosome 1"/>
</dbReference>
<dbReference type="GO" id="GO:0005576">
    <property type="term" value="C:extracellular region"/>
    <property type="evidence" value="ECO:0000318"/>
    <property type="project" value="GO_Central"/>
</dbReference>
<dbReference type="InterPro" id="IPR011874">
    <property type="entry name" value="Fibro_Slime"/>
</dbReference>
<dbReference type="InterPro" id="IPR037524">
    <property type="entry name" value="PA14/GLEYA"/>
</dbReference>
<dbReference type="InterPro" id="IPR011658">
    <property type="entry name" value="PA14_dom"/>
</dbReference>
<dbReference type="InterPro" id="IPR051154">
    <property type="entry name" value="Prespore-cell_inducing_factor"/>
</dbReference>
<dbReference type="InterPro" id="IPR001673">
    <property type="entry name" value="S_mold_repeat"/>
</dbReference>
<dbReference type="NCBIfam" id="TIGR02148">
    <property type="entry name" value="Fibro_Slime"/>
    <property type="match status" value="1"/>
</dbReference>
<dbReference type="PANTHER" id="PTHR31137:SF8">
    <property type="entry name" value="PROTEIN PSIB-RELATED"/>
    <property type="match status" value="1"/>
</dbReference>
<dbReference type="PANTHER" id="PTHR31137">
    <property type="entry name" value="PROTEIN PSIB-RELATED-RELATED"/>
    <property type="match status" value="1"/>
</dbReference>
<dbReference type="Pfam" id="PF00526">
    <property type="entry name" value="Dicty_CTDC"/>
    <property type="match status" value="3"/>
</dbReference>
<dbReference type="Pfam" id="PF07691">
    <property type="entry name" value="PA14"/>
    <property type="match status" value="1"/>
</dbReference>
<dbReference type="SMART" id="SM00758">
    <property type="entry name" value="PA14"/>
    <property type="match status" value="1"/>
</dbReference>
<dbReference type="PROSITE" id="PS51820">
    <property type="entry name" value="PA14"/>
    <property type="match status" value="1"/>
</dbReference>
<evidence type="ECO:0000255" key="1"/>
<evidence type="ECO:0000255" key="2">
    <source>
        <dbReference type="PROSITE-ProRule" id="PRU01164"/>
    </source>
</evidence>
<evidence type="ECO:0000305" key="3"/>
<reference key="1">
    <citation type="journal article" date="2005" name="Nature">
        <title>The genome of the social amoeba Dictyostelium discoideum.</title>
        <authorList>
            <person name="Eichinger L."/>
            <person name="Pachebat J.A."/>
            <person name="Gloeckner G."/>
            <person name="Rajandream M.A."/>
            <person name="Sucgang R."/>
            <person name="Berriman M."/>
            <person name="Song J."/>
            <person name="Olsen R."/>
            <person name="Szafranski K."/>
            <person name="Xu Q."/>
            <person name="Tunggal B."/>
            <person name="Kummerfeld S."/>
            <person name="Madera M."/>
            <person name="Konfortov B.A."/>
            <person name="Rivero F."/>
            <person name="Bankier A.T."/>
            <person name="Lehmann R."/>
            <person name="Hamlin N."/>
            <person name="Davies R."/>
            <person name="Gaudet P."/>
            <person name="Fey P."/>
            <person name="Pilcher K."/>
            <person name="Chen G."/>
            <person name="Saunders D."/>
            <person name="Sodergren E.J."/>
            <person name="Davis P."/>
            <person name="Kerhornou A."/>
            <person name="Nie X."/>
            <person name="Hall N."/>
            <person name="Anjard C."/>
            <person name="Hemphill L."/>
            <person name="Bason N."/>
            <person name="Farbrother P."/>
            <person name="Desany B."/>
            <person name="Just E."/>
            <person name="Morio T."/>
            <person name="Rost R."/>
            <person name="Churcher C.M."/>
            <person name="Cooper J."/>
            <person name="Haydock S."/>
            <person name="van Driessche N."/>
            <person name="Cronin A."/>
            <person name="Goodhead I."/>
            <person name="Muzny D.M."/>
            <person name="Mourier T."/>
            <person name="Pain A."/>
            <person name="Lu M."/>
            <person name="Harper D."/>
            <person name="Lindsay R."/>
            <person name="Hauser H."/>
            <person name="James K.D."/>
            <person name="Quiles M."/>
            <person name="Madan Babu M."/>
            <person name="Saito T."/>
            <person name="Buchrieser C."/>
            <person name="Wardroper A."/>
            <person name="Felder M."/>
            <person name="Thangavelu M."/>
            <person name="Johnson D."/>
            <person name="Knights A."/>
            <person name="Loulseged H."/>
            <person name="Mungall K.L."/>
            <person name="Oliver K."/>
            <person name="Price C."/>
            <person name="Quail M.A."/>
            <person name="Urushihara H."/>
            <person name="Hernandez J."/>
            <person name="Rabbinowitsch E."/>
            <person name="Steffen D."/>
            <person name="Sanders M."/>
            <person name="Ma J."/>
            <person name="Kohara Y."/>
            <person name="Sharp S."/>
            <person name="Simmonds M.N."/>
            <person name="Spiegler S."/>
            <person name="Tivey A."/>
            <person name="Sugano S."/>
            <person name="White B."/>
            <person name="Walker D."/>
            <person name="Woodward J.R."/>
            <person name="Winckler T."/>
            <person name="Tanaka Y."/>
            <person name="Shaulsky G."/>
            <person name="Schleicher M."/>
            <person name="Weinstock G.M."/>
            <person name="Rosenthal A."/>
            <person name="Cox E.C."/>
            <person name="Chisholm R.L."/>
            <person name="Gibbs R.A."/>
            <person name="Loomis W.F."/>
            <person name="Platzer M."/>
            <person name="Kay R.R."/>
            <person name="Williams J.G."/>
            <person name="Dear P.H."/>
            <person name="Noegel A.A."/>
            <person name="Barrell B.G."/>
            <person name="Kuspa A."/>
        </authorList>
    </citation>
    <scope>NUCLEOTIDE SEQUENCE [LARGE SCALE GENOMIC DNA]</scope>
    <source>
        <strain>AX4</strain>
    </source>
</reference>